<evidence type="ECO:0000255" key="1">
    <source>
        <dbReference type="HAMAP-Rule" id="MF_02100"/>
    </source>
</evidence>
<sequence>MADFNQLFDQWANTYDNTVFSTDNEYTQVFERYETTLQSICDAIQDKKQGLTLEIGVGTGNLTKHLEQQGFQVIGIEPSKQMRRIAKDKLPHIEIVDGHFLSIPVAKTFDSIVTSYAFHHLNLEEKHQALTYLDSFLNQSGKIVIADTMFESEEYKRELLNKVEKDRAYNLLEDLKAEYYEYINDITDIFLNLGYSFTISKMNKYVWIICATKGGL</sequence>
<comment type="function">
    <text evidence="1">Could be a S-adenosyl-L-methionine-dependent methyltransferase.</text>
</comment>
<comment type="similarity">
    <text evidence="1">Belongs to the methyltransferase superfamily. YrrT family.</text>
</comment>
<proteinExistence type="inferred from homology"/>
<reference key="1">
    <citation type="submission" date="2007-10" db="EMBL/GenBank/DDBJ databases">
        <title>Complete genome of Alkaliphilus oremlandii OhILAs.</title>
        <authorList>
            <person name="Copeland A."/>
            <person name="Lucas S."/>
            <person name="Lapidus A."/>
            <person name="Barry K."/>
            <person name="Detter J.C."/>
            <person name="Glavina del Rio T."/>
            <person name="Hammon N."/>
            <person name="Israni S."/>
            <person name="Dalin E."/>
            <person name="Tice H."/>
            <person name="Pitluck S."/>
            <person name="Chain P."/>
            <person name="Malfatti S."/>
            <person name="Shin M."/>
            <person name="Vergez L."/>
            <person name="Schmutz J."/>
            <person name="Larimer F."/>
            <person name="Land M."/>
            <person name="Hauser L."/>
            <person name="Kyrpides N."/>
            <person name="Mikhailova N."/>
            <person name="Stolz J.F."/>
            <person name="Dawson A."/>
            <person name="Fisher E."/>
            <person name="Crable B."/>
            <person name="Perera E."/>
            <person name="Lisak J."/>
            <person name="Ranganathan M."/>
            <person name="Basu P."/>
            <person name="Richardson P."/>
        </authorList>
    </citation>
    <scope>NUCLEOTIDE SEQUENCE [LARGE SCALE GENOMIC DNA]</scope>
    <source>
        <strain>OhILAs</strain>
    </source>
</reference>
<dbReference type="EC" id="2.1.1.-" evidence="1"/>
<dbReference type="EMBL" id="CP000853">
    <property type="protein sequence ID" value="ABW18623.1"/>
    <property type="molecule type" value="Genomic_DNA"/>
</dbReference>
<dbReference type="RefSeq" id="WP_012158935.1">
    <property type="nucleotide sequence ID" value="NC_009922.1"/>
</dbReference>
<dbReference type="SMR" id="A8MGS9"/>
<dbReference type="STRING" id="350688.Clos_1076"/>
<dbReference type="KEGG" id="aoe:Clos_1076"/>
<dbReference type="eggNOG" id="COG2226">
    <property type="taxonomic scope" value="Bacteria"/>
</dbReference>
<dbReference type="HOGENOM" id="CLU_111961_0_0_9"/>
<dbReference type="OrthoDB" id="122388at2"/>
<dbReference type="Proteomes" id="UP000000269">
    <property type="component" value="Chromosome"/>
</dbReference>
<dbReference type="GO" id="GO:0008757">
    <property type="term" value="F:S-adenosylmethionine-dependent methyltransferase activity"/>
    <property type="evidence" value="ECO:0007669"/>
    <property type="project" value="UniProtKB-UniRule"/>
</dbReference>
<dbReference type="GO" id="GO:0032259">
    <property type="term" value="P:methylation"/>
    <property type="evidence" value="ECO:0007669"/>
    <property type="project" value="UniProtKB-KW"/>
</dbReference>
<dbReference type="CDD" id="cd02440">
    <property type="entry name" value="AdoMet_MTases"/>
    <property type="match status" value="1"/>
</dbReference>
<dbReference type="Gene3D" id="3.40.50.150">
    <property type="entry name" value="Vaccinia Virus protein VP39"/>
    <property type="match status" value="1"/>
</dbReference>
<dbReference type="HAMAP" id="MF_02100">
    <property type="entry name" value="Methyltr_YrrT"/>
    <property type="match status" value="1"/>
</dbReference>
<dbReference type="InterPro" id="IPR041698">
    <property type="entry name" value="Methyltransf_25"/>
</dbReference>
<dbReference type="InterPro" id="IPR029063">
    <property type="entry name" value="SAM-dependent_MTases_sf"/>
</dbReference>
<dbReference type="InterPro" id="IPR023553">
    <property type="entry name" value="Uncharacterised_MeTfrase_YrrT"/>
</dbReference>
<dbReference type="PANTHER" id="PTHR43861">
    <property type="entry name" value="TRANS-ACONITATE 2-METHYLTRANSFERASE-RELATED"/>
    <property type="match status" value="1"/>
</dbReference>
<dbReference type="Pfam" id="PF13649">
    <property type="entry name" value="Methyltransf_25"/>
    <property type="match status" value="1"/>
</dbReference>
<dbReference type="SUPFAM" id="SSF53335">
    <property type="entry name" value="S-adenosyl-L-methionine-dependent methyltransferases"/>
    <property type="match status" value="1"/>
</dbReference>
<protein>
    <recommendedName>
        <fullName evidence="1">Uncharacterized methyltransferase Clos_1076</fullName>
        <ecNumber evidence="1">2.1.1.-</ecNumber>
    </recommendedName>
</protein>
<gene>
    <name type="ordered locus">Clos_1076</name>
</gene>
<feature type="chain" id="PRO_0000373838" description="Uncharacterized methyltransferase Clos_1076">
    <location>
        <begin position="1"/>
        <end position="216"/>
    </location>
</feature>
<feature type="binding site" evidence="1">
    <location>
        <position position="56"/>
    </location>
    <ligand>
        <name>S-adenosyl-L-methionine</name>
        <dbReference type="ChEBI" id="CHEBI:59789"/>
    </ligand>
</feature>
<feature type="binding site" evidence="1">
    <location>
        <position position="77"/>
    </location>
    <ligand>
        <name>S-adenosyl-L-methionine</name>
        <dbReference type="ChEBI" id="CHEBI:59789"/>
    </ligand>
</feature>
<keyword id="KW-0489">Methyltransferase</keyword>
<keyword id="KW-1185">Reference proteome</keyword>
<keyword id="KW-0949">S-adenosyl-L-methionine</keyword>
<keyword id="KW-0808">Transferase</keyword>
<name>Y1076_ALKOO</name>
<organism>
    <name type="scientific">Alkaliphilus oremlandii (strain OhILAs)</name>
    <name type="common">Clostridium oremlandii (strain OhILAs)</name>
    <dbReference type="NCBI Taxonomy" id="350688"/>
    <lineage>
        <taxon>Bacteria</taxon>
        <taxon>Bacillati</taxon>
        <taxon>Bacillota</taxon>
        <taxon>Clostridia</taxon>
        <taxon>Peptostreptococcales</taxon>
        <taxon>Natronincolaceae</taxon>
        <taxon>Alkaliphilus</taxon>
    </lineage>
</organism>
<accession>A8MGS9</accession>